<name>ETS1_RAT</name>
<sequence>MKAAVDLKPTLTIIKTEKVDLELFPSPDMECADVPLLTPSSKEMMSQALKATFSGFTKEQQRLGIPKDPRQWTETHVRDWVMWAVNEFSLKGVDFQKFCMNGAALCALGKECFLELAPDFVGDILWEHLEILQKEDVKPYQVNGVNPTYPESRYTSDYFISYGIEHAQCVPPSEFSEPSFITESYQTLHPISSEELLSLKYENDYPSVILRDPLQTDTLQTDYFAIKQEVLTPDNMCMGRASRGKLGGQDSFESIESYDSCDRLTQSWSSQSSFNSLQRVPSYDSFDSEDYPAALPNHKPKGTFKDYVRDRADLNKDKPVIPAAALAGYTGSGPIQLWQFLLELLTDKSCQSFISWTGDGWEFKLSDPDEVARRWGKRKNKPKMNYEKLSRGLRYYYDKNIIHKTAGKRYVYRFVCDLQSLLGYTPEELHAMLDVKPDADE</sequence>
<reference key="1">
    <citation type="journal article" date="1994" name="J. Virol.">
        <title>Effects of provirus integration in the Tpl-1/Ets-1 locus in Moloney murine leukemia virus-induced rat T-cell lymphomas: levels of expression, polyadenylation, transcriptional initiation, and differential splicing of the Ets-1 mRNA.</title>
        <authorList>
            <person name="Bellacosa A."/>
            <person name="Datta K."/>
            <person name="Bear S.E."/>
            <person name="Patriotis C."/>
            <person name="Lazo P.A."/>
            <person name="Copeland N.G."/>
            <person name="Jenkins N.A."/>
            <person name="Tsichlis P.N."/>
        </authorList>
    </citation>
    <scope>NUCLEOTIDE SEQUENCE [MRNA]</scope>
</reference>
<reference key="2">
    <citation type="journal article" date="2004" name="Genome Res.">
        <title>The status, quality, and expansion of the NIH full-length cDNA project: the Mammalian Gene Collection (MGC).</title>
        <authorList>
            <consortium name="The MGC Project Team"/>
        </authorList>
    </citation>
    <scope>NUCLEOTIDE SEQUENCE [LARGE SCALE MRNA]</scope>
    <source>
        <tissue>Prostate</tissue>
    </source>
</reference>
<reference key="3">
    <citation type="journal article" date="2012" name="Nat. Commun.">
        <title>Quantitative maps of protein phosphorylation sites across 14 different rat organs and tissues.</title>
        <authorList>
            <person name="Lundby A."/>
            <person name="Secher A."/>
            <person name="Lage K."/>
            <person name="Nordsborg N.B."/>
            <person name="Dmytriyev A."/>
            <person name="Lundby C."/>
            <person name="Olsen J.V."/>
        </authorList>
    </citation>
    <scope>PHOSPHORYLATION [LARGE SCALE ANALYSIS] AT SER-251 AND SER-282</scope>
    <scope>IDENTIFICATION BY MASS SPECTROMETRY [LARGE SCALE ANALYSIS]</scope>
</reference>
<proteinExistence type="evidence at protein level"/>
<keyword id="KW-0007">Acetylation</keyword>
<keyword id="KW-0025">Alternative splicing</keyword>
<keyword id="KW-0963">Cytoplasm</keyword>
<keyword id="KW-0238">DNA-binding</keyword>
<keyword id="KW-0391">Immunity</keyword>
<keyword id="KW-1017">Isopeptide bond</keyword>
<keyword id="KW-0539">Nucleus</keyword>
<keyword id="KW-0597">Phosphoprotein</keyword>
<keyword id="KW-0656">Proto-oncogene</keyword>
<keyword id="KW-1185">Reference proteome</keyword>
<keyword id="KW-0804">Transcription</keyword>
<keyword id="KW-0805">Transcription regulation</keyword>
<keyword id="KW-0832">Ubl conjugation</keyword>
<feature type="chain" id="PRO_0000204071" description="Protein C-ets-1">
    <location>
        <begin position="1"/>
        <end position="441"/>
    </location>
</feature>
<feature type="domain" description="PNT" evidence="5">
    <location>
        <begin position="51"/>
        <end position="136"/>
    </location>
</feature>
<feature type="DNA-binding region" description="ETS" evidence="4">
    <location>
        <begin position="335"/>
        <end position="415"/>
    </location>
</feature>
<feature type="region of interest" description="Activation domain; required for transcription activation" evidence="2">
    <location>
        <begin position="130"/>
        <end position="243"/>
    </location>
</feature>
<feature type="region of interest" description="Helix HI-1" evidence="3">
    <location>
        <begin position="304"/>
        <end position="312"/>
    </location>
</feature>
<feature type="region of interest" description="Helix HI-2" evidence="3">
    <location>
        <begin position="323"/>
        <end position="330"/>
    </location>
</feature>
<feature type="region of interest" description="Helix H4" evidence="3">
    <location>
        <begin position="418"/>
        <end position="422"/>
    </location>
</feature>
<feature type="region of interest" description="Helix H5" evidence="3">
    <location>
        <begin position="426"/>
        <end position="432"/>
    </location>
</feature>
<feature type="modified residue" description="N6-acetyllysine; alternate" evidence="2">
    <location>
        <position position="8"/>
    </location>
</feature>
<feature type="modified residue" description="N6-acetyllysine; alternate" evidence="2">
    <location>
        <position position="15"/>
    </location>
</feature>
<feature type="modified residue" description="Phosphothreonine; by MAPK" evidence="3">
    <location>
        <position position="38"/>
    </location>
</feature>
<feature type="modified residue" description="Phosphotyrosine" evidence="2">
    <location>
        <position position="223"/>
    </location>
</feature>
<feature type="modified residue" description="Phosphoserine" evidence="7">
    <location>
        <position position="251"/>
    </location>
</feature>
<feature type="modified residue" description="Phosphoserine" evidence="3">
    <location>
        <position position="254"/>
    </location>
</feature>
<feature type="modified residue" description="Phosphothreonine" evidence="2">
    <location>
        <position position="265"/>
    </location>
</feature>
<feature type="modified residue" description="Phosphoserine" evidence="2">
    <location>
        <position position="267"/>
    </location>
</feature>
<feature type="modified residue" description="Phosphoserine" evidence="2">
    <location>
        <position position="270"/>
    </location>
</feature>
<feature type="modified residue" description="Phosphoserine" evidence="7">
    <location>
        <position position="282"/>
    </location>
</feature>
<feature type="modified residue" description="Phosphoserine" evidence="2">
    <location>
        <position position="285"/>
    </location>
</feature>
<feature type="modified residue" description="N6-acetyllysine" evidence="2">
    <location>
        <position position="305"/>
    </location>
</feature>
<feature type="cross-link" description="Glycyl lysine isopeptide (Lys-Gly) (interchain with G-Cter in SUMO2); alternate" evidence="2">
    <location>
        <position position="8"/>
    </location>
</feature>
<feature type="cross-link" description="Glycyl lysine isopeptide (Lys-Gly) (interchain with G-Cter in SUMO); alternate" evidence="1">
    <location>
        <position position="15"/>
    </location>
</feature>
<feature type="cross-link" description="Glycyl lysine isopeptide (Lys-Gly) (interchain with G-Cter in SUMO2); alternate" evidence="2">
    <location>
        <position position="15"/>
    </location>
</feature>
<feature type="cross-link" description="Glycyl lysine isopeptide (Lys-Gly) (interchain with G-Cter in SUMO2)" evidence="2">
    <location>
        <position position="138"/>
    </location>
</feature>
<feature type="cross-link" description="Glycyl lysine isopeptide (Lys-Gly) (interchain with G-Cter in SUMO)" evidence="1">
    <location>
        <position position="227"/>
    </location>
</feature>
<gene>
    <name type="primary">Ets1</name>
    <name type="synonym">Ets-1</name>
</gene>
<protein>
    <recommendedName>
        <fullName>Protein C-ets-1</fullName>
    </recommendedName>
    <alternativeName>
        <fullName>p54</fullName>
    </alternativeName>
</protein>
<accession>P41156</accession>
<accession>Q3T1H1</accession>
<dbReference type="EMBL" id="L20681">
    <property type="protein sequence ID" value="AAA21093.1"/>
    <property type="molecule type" value="mRNA"/>
</dbReference>
<dbReference type="EMBL" id="BC101927">
    <property type="protein sequence ID" value="AAI01928.1"/>
    <property type="molecule type" value="mRNA"/>
</dbReference>
<dbReference type="PIR" id="A53988">
    <property type="entry name" value="A53988"/>
</dbReference>
<dbReference type="RefSeq" id="NP_036687.1">
    <molecule id="P41156-1"/>
    <property type="nucleotide sequence ID" value="NM_012555.2"/>
</dbReference>
<dbReference type="BMRB" id="P41156"/>
<dbReference type="SMR" id="P41156"/>
<dbReference type="FunCoup" id="P41156">
    <property type="interactions" value="1059"/>
</dbReference>
<dbReference type="MINT" id="P41156"/>
<dbReference type="STRING" id="10116.ENSRNOP00000011925"/>
<dbReference type="iPTMnet" id="P41156"/>
<dbReference type="PhosphoSitePlus" id="P41156"/>
<dbReference type="PaxDb" id="10116-ENSRNOP00000011925"/>
<dbReference type="Ensembl" id="ENSRNOT00000011925.5">
    <molecule id="P41156-1"/>
    <property type="protein sequence ID" value="ENSRNOP00000011925.4"/>
    <property type="gene ID" value="ENSRNOG00000008941.9"/>
</dbReference>
<dbReference type="GeneID" id="24356"/>
<dbReference type="KEGG" id="rno:24356"/>
<dbReference type="UCSC" id="RGD:2583">
    <molecule id="P41156-1"/>
    <property type="organism name" value="rat"/>
</dbReference>
<dbReference type="AGR" id="RGD:2583"/>
<dbReference type="CTD" id="2113"/>
<dbReference type="RGD" id="2583">
    <property type="gene designation" value="Ets1"/>
</dbReference>
<dbReference type="eggNOG" id="KOG3806">
    <property type="taxonomic scope" value="Eukaryota"/>
</dbReference>
<dbReference type="GeneTree" id="ENSGT00940000159519"/>
<dbReference type="HOGENOM" id="CLU_031197_0_0_1"/>
<dbReference type="InParanoid" id="P41156"/>
<dbReference type="PhylomeDB" id="P41156"/>
<dbReference type="TreeFam" id="TF316214"/>
<dbReference type="Reactome" id="R-RNO-2559585">
    <property type="pathway name" value="Oncogene Induced Senescence"/>
</dbReference>
<dbReference type="PRO" id="PR:P41156"/>
<dbReference type="Proteomes" id="UP000002494">
    <property type="component" value="Chromosome 8"/>
</dbReference>
<dbReference type="Bgee" id="ENSRNOG00000008941">
    <property type="expression patterns" value="Expressed in thymus and 18 other cell types or tissues"/>
</dbReference>
<dbReference type="GO" id="GO:0005737">
    <property type="term" value="C:cytoplasm"/>
    <property type="evidence" value="ECO:0007669"/>
    <property type="project" value="UniProtKB-SubCell"/>
</dbReference>
<dbReference type="GO" id="GO:0005634">
    <property type="term" value="C:nucleus"/>
    <property type="evidence" value="ECO:0000250"/>
    <property type="project" value="UniProtKB"/>
</dbReference>
<dbReference type="GO" id="GO:0005667">
    <property type="term" value="C:transcription regulator complex"/>
    <property type="evidence" value="ECO:0000266"/>
    <property type="project" value="RGD"/>
</dbReference>
<dbReference type="GO" id="GO:0003677">
    <property type="term" value="F:DNA binding"/>
    <property type="evidence" value="ECO:0000250"/>
    <property type="project" value="UniProtKB"/>
</dbReference>
<dbReference type="GO" id="GO:0001228">
    <property type="term" value="F:DNA-binding transcription activator activity, RNA polymerase II-specific"/>
    <property type="evidence" value="ECO:0000266"/>
    <property type="project" value="RGD"/>
</dbReference>
<dbReference type="GO" id="GO:0003700">
    <property type="term" value="F:DNA-binding transcription factor activity"/>
    <property type="evidence" value="ECO:0000250"/>
    <property type="project" value="UniProtKB"/>
</dbReference>
<dbReference type="GO" id="GO:0000981">
    <property type="term" value="F:DNA-binding transcription factor activity, RNA polymerase II-specific"/>
    <property type="evidence" value="ECO:0000266"/>
    <property type="project" value="RGD"/>
</dbReference>
<dbReference type="GO" id="GO:0140297">
    <property type="term" value="F:DNA-binding transcription factor binding"/>
    <property type="evidence" value="ECO:0000266"/>
    <property type="project" value="RGD"/>
</dbReference>
<dbReference type="GO" id="GO:0035035">
    <property type="term" value="F:histone acetyltransferase binding"/>
    <property type="evidence" value="ECO:0000353"/>
    <property type="project" value="RGD"/>
</dbReference>
<dbReference type="GO" id="GO:0042802">
    <property type="term" value="F:identical protein binding"/>
    <property type="evidence" value="ECO:0000266"/>
    <property type="project" value="RGD"/>
</dbReference>
<dbReference type="GO" id="GO:0003676">
    <property type="term" value="F:nucleic acid binding"/>
    <property type="evidence" value="ECO:0000266"/>
    <property type="project" value="RGD"/>
</dbReference>
<dbReference type="GO" id="GO:0000978">
    <property type="term" value="F:RNA polymerase II cis-regulatory region sequence-specific DNA binding"/>
    <property type="evidence" value="ECO:0000266"/>
    <property type="project" value="RGD"/>
</dbReference>
<dbReference type="GO" id="GO:0061629">
    <property type="term" value="F:RNA polymerase II-specific DNA-binding transcription factor binding"/>
    <property type="evidence" value="ECO:0000266"/>
    <property type="project" value="RGD"/>
</dbReference>
<dbReference type="GO" id="GO:0043565">
    <property type="term" value="F:sequence-specific DNA binding"/>
    <property type="evidence" value="ECO:0000314"/>
    <property type="project" value="RGD"/>
</dbReference>
<dbReference type="GO" id="GO:1990837">
    <property type="term" value="F:sequence-specific double-stranded DNA binding"/>
    <property type="evidence" value="ECO:0000266"/>
    <property type="project" value="RGD"/>
</dbReference>
<dbReference type="GO" id="GO:0000976">
    <property type="term" value="F:transcription cis-regulatory region binding"/>
    <property type="evidence" value="ECO:0000266"/>
    <property type="project" value="RGD"/>
</dbReference>
<dbReference type="GO" id="GO:0001222">
    <property type="term" value="F:transcription corepressor binding"/>
    <property type="evidence" value="ECO:0000266"/>
    <property type="project" value="RGD"/>
</dbReference>
<dbReference type="GO" id="GO:0060055">
    <property type="term" value="P:angiogenesis involved in wound healing"/>
    <property type="evidence" value="ECO:0000270"/>
    <property type="project" value="RGD"/>
</dbReference>
<dbReference type="GO" id="GO:0030154">
    <property type="term" value="P:cell differentiation"/>
    <property type="evidence" value="ECO:0000318"/>
    <property type="project" value="GO_Central"/>
</dbReference>
<dbReference type="GO" id="GO:0048870">
    <property type="term" value="P:cell motility"/>
    <property type="evidence" value="ECO:0000266"/>
    <property type="project" value="RGD"/>
</dbReference>
<dbReference type="GO" id="GO:0070301">
    <property type="term" value="P:cellular response to hydrogen peroxide"/>
    <property type="evidence" value="ECO:0000270"/>
    <property type="project" value="RGD"/>
</dbReference>
<dbReference type="GO" id="GO:0044849">
    <property type="term" value="P:estrous cycle"/>
    <property type="evidence" value="ECO:0000270"/>
    <property type="project" value="RGD"/>
</dbReference>
<dbReference type="GO" id="GO:0007565">
    <property type="term" value="P:female pregnancy"/>
    <property type="evidence" value="ECO:0000270"/>
    <property type="project" value="RGD"/>
</dbReference>
<dbReference type="GO" id="GO:0021854">
    <property type="term" value="P:hypothalamus development"/>
    <property type="evidence" value="ECO:0000270"/>
    <property type="project" value="RGD"/>
</dbReference>
<dbReference type="GO" id="GO:0002376">
    <property type="term" value="P:immune system process"/>
    <property type="evidence" value="ECO:0007669"/>
    <property type="project" value="UniProtKB-KW"/>
</dbReference>
<dbReference type="GO" id="GO:0050728">
    <property type="term" value="P:negative regulation of inflammatory response"/>
    <property type="evidence" value="ECO:0000266"/>
    <property type="project" value="RGD"/>
</dbReference>
<dbReference type="GO" id="GO:0021983">
    <property type="term" value="P:pituitary gland development"/>
    <property type="evidence" value="ECO:0000270"/>
    <property type="project" value="RGD"/>
</dbReference>
<dbReference type="GO" id="GO:0030578">
    <property type="term" value="P:PML body organization"/>
    <property type="evidence" value="ECO:0000266"/>
    <property type="project" value="RGD"/>
</dbReference>
<dbReference type="GO" id="GO:0045766">
    <property type="term" value="P:positive regulation of angiogenesis"/>
    <property type="evidence" value="ECO:0000315"/>
    <property type="project" value="RGD"/>
</dbReference>
<dbReference type="GO" id="GO:0043536">
    <property type="term" value="P:positive regulation of blood vessel endothelial cell migration"/>
    <property type="evidence" value="ECO:0000266"/>
    <property type="project" value="RGD"/>
</dbReference>
<dbReference type="GO" id="GO:0030335">
    <property type="term" value="P:positive regulation of cell migration"/>
    <property type="evidence" value="ECO:0000315"/>
    <property type="project" value="RGD"/>
</dbReference>
<dbReference type="GO" id="GO:0008284">
    <property type="term" value="P:positive regulation of cell population proliferation"/>
    <property type="evidence" value="ECO:0000315"/>
    <property type="project" value="RGD"/>
</dbReference>
<dbReference type="GO" id="GO:0045893">
    <property type="term" value="P:positive regulation of DNA-templated transcription"/>
    <property type="evidence" value="ECO:0000250"/>
    <property type="project" value="UniProtKB"/>
</dbReference>
<dbReference type="GO" id="GO:0010595">
    <property type="term" value="P:positive regulation of endothelial cell migration"/>
    <property type="evidence" value="ECO:0000250"/>
    <property type="project" value="UniProtKB"/>
</dbReference>
<dbReference type="GO" id="GO:0045648">
    <property type="term" value="P:positive regulation of erythrocyte differentiation"/>
    <property type="evidence" value="ECO:0000250"/>
    <property type="project" value="UniProtKB"/>
</dbReference>
<dbReference type="GO" id="GO:0010628">
    <property type="term" value="P:positive regulation of gene expression"/>
    <property type="evidence" value="ECO:0000266"/>
    <property type="project" value="RGD"/>
</dbReference>
<dbReference type="GO" id="GO:0050729">
    <property type="term" value="P:positive regulation of inflammatory response"/>
    <property type="evidence" value="ECO:0000266"/>
    <property type="project" value="RGD"/>
</dbReference>
<dbReference type="GO" id="GO:1904996">
    <property type="term" value="P:positive regulation of leukocyte adhesion to vascular endothelial cell"/>
    <property type="evidence" value="ECO:0000266"/>
    <property type="project" value="RGD"/>
</dbReference>
<dbReference type="GO" id="GO:1902895">
    <property type="term" value="P:positive regulation of miRNA transcription"/>
    <property type="evidence" value="ECO:0000266"/>
    <property type="project" value="RGD"/>
</dbReference>
<dbReference type="GO" id="GO:0045944">
    <property type="term" value="P:positive regulation of transcription by RNA polymerase II"/>
    <property type="evidence" value="ECO:0000266"/>
    <property type="project" value="RGD"/>
</dbReference>
<dbReference type="GO" id="GO:0045765">
    <property type="term" value="P:regulation of angiogenesis"/>
    <property type="evidence" value="ECO:0000250"/>
    <property type="project" value="UniProtKB"/>
</dbReference>
<dbReference type="GO" id="GO:0010715">
    <property type="term" value="P:regulation of extracellular matrix disassembly"/>
    <property type="evidence" value="ECO:0000315"/>
    <property type="project" value="RGD"/>
</dbReference>
<dbReference type="GO" id="GO:0006357">
    <property type="term" value="P:regulation of transcription by RNA polymerase II"/>
    <property type="evidence" value="ECO:0000266"/>
    <property type="project" value="RGD"/>
</dbReference>
<dbReference type="GO" id="GO:0032355">
    <property type="term" value="P:response to estradiol"/>
    <property type="evidence" value="ECO:0000270"/>
    <property type="project" value="RGD"/>
</dbReference>
<dbReference type="GO" id="GO:0001666">
    <property type="term" value="P:response to hypoxia"/>
    <property type="evidence" value="ECO:0000270"/>
    <property type="project" value="RGD"/>
</dbReference>
<dbReference type="GO" id="GO:0070555">
    <property type="term" value="P:response to interleukin-1"/>
    <property type="evidence" value="ECO:0000270"/>
    <property type="project" value="RGD"/>
</dbReference>
<dbReference type="GO" id="GO:0034616">
    <property type="term" value="P:response to laminar fluid shear stress"/>
    <property type="evidence" value="ECO:0000270"/>
    <property type="project" value="RGD"/>
</dbReference>
<dbReference type="GO" id="GO:0009612">
    <property type="term" value="P:response to mechanical stimulus"/>
    <property type="evidence" value="ECO:0000270"/>
    <property type="project" value="RGD"/>
</dbReference>
<dbReference type="GO" id="GO:1902074">
    <property type="term" value="P:response to salt"/>
    <property type="evidence" value="ECO:0000270"/>
    <property type="project" value="RGD"/>
</dbReference>
<dbReference type="CDD" id="cd08542">
    <property type="entry name" value="SAM_PNT-ETS-1"/>
    <property type="match status" value="1"/>
</dbReference>
<dbReference type="FunFam" id="1.10.10.10:FF:000097">
    <property type="entry name" value="Protein c-ets-1 isoform 1"/>
    <property type="match status" value="1"/>
</dbReference>
<dbReference type="FunFam" id="1.10.150.50:FF:000014">
    <property type="entry name" value="Protein c-ets-1 isoform 1"/>
    <property type="match status" value="1"/>
</dbReference>
<dbReference type="Gene3D" id="1.10.150.50">
    <property type="entry name" value="Transcription Factor, Ets-1"/>
    <property type="match status" value="1"/>
</dbReference>
<dbReference type="Gene3D" id="1.10.10.10">
    <property type="entry name" value="Winged helix-like DNA-binding domain superfamily/Winged helix DNA-binding domain"/>
    <property type="match status" value="1"/>
</dbReference>
<dbReference type="InterPro" id="IPR045688">
    <property type="entry name" value="Ets1_N_flank"/>
</dbReference>
<dbReference type="InterPro" id="IPR000418">
    <property type="entry name" value="Ets_dom"/>
</dbReference>
<dbReference type="InterPro" id="IPR046328">
    <property type="entry name" value="ETS_fam"/>
</dbReference>
<dbReference type="InterPro" id="IPR003118">
    <property type="entry name" value="Pointed_dom"/>
</dbReference>
<dbReference type="InterPro" id="IPR013761">
    <property type="entry name" value="SAM/pointed_sf"/>
</dbReference>
<dbReference type="InterPro" id="IPR041886">
    <property type="entry name" value="SAM_PNT-ETS-1"/>
</dbReference>
<dbReference type="InterPro" id="IPR016311">
    <property type="entry name" value="Transform_prot_C-ets"/>
</dbReference>
<dbReference type="InterPro" id="IPR036388">
    <property type="entry name" value="WH-like_DNA-bd_sf"/>
</dbReference>
<dbReference type="InterPro" id="IPR036390">
    <property type="entry name" value="WH_DNA-bd_sf"/>
</dbReference>
<dbReference type="PANTHER" id="PTHR11849">
    <property type="entry name" value="ETS"/>
    <property type="match status" value="1"/>
</dbReference>
<dbReference type="PANTHER" id="PTHR11849:SF314">
    <property type="entry name" value="PROTEIN C-ETS-1"/>
    <property type="match status" value="1"/>
</dbReference>
<dbReference type="Pfam" id="PF00178">
    <property type="entry name" value="Ets"/>
    <property type="match status" value="1"/>
</dbReference>
<dbReference type="Pfam" id="PF19525">
    <property type="entry name" value="Ets1_N_flank"/>
    <property type="match status" value="1"/>
</dbReference>
<dbReference type="Pfam" id="PF02198">
    <property type="entry name" value="SAM_PNT"/>
    <property type="match status" value="1"/>
</dbReference>
<dbReference type="PIRSF" id="PIRSF001698">
    <property type="entry name" value="Transforming_factor_C-ets"/>
    <property type="match status" value="1"/>
</dbReference>
<dbReference type="PRINTS" id="PR00454">
    <property type="entry name" value="ETSDOMAIN"/>
</dbReference>
<dbReference type="SMART" id="SM00413">
    <property type="entry name" value="ETS"/>
    <property type="match status" value="1"/>
</dbReference>
<dbReference type="SMART" id="SM00251">
    <property type="entry name" value="SAM_PNT"/>
    <property type="match status" value="1"/>
</dbReference>
<dbReference type="SUPFAM" id="SSF47769">
    <property type="entry name" value="SAM/Pointed domain"/>
    <property type="match status" value="1"/>
</dbReference>
<dbReference type="SUPFAM" id="SSF46785">
    <property type="entry name" value="Winged helix' DNA-binding domain"/>
    <property type="match status" value="1"/>
</dbReference>
<dbReference type="PROSITE" id="PS00345">
    <property type="entry name" value="ETS_DOMAIN_1"/>
    <property type="match status" value="1"/>
</dbReference>
<dbReference type="PROSITE" id="PS00346">
    <property type="entry name" value="ETS_DOMAIN_2"/>
    <property type="match status" value="1"/>
</dbReference>
<dbReference type="PROSITE" id="PS50061">
    <property type="entry name" value="ETS_DOMAIN_3"/>
    <property type="match status" value="1"/>
</dbReference>
<dbReference type="PROSITE" id="PS51433">
    <property type="entry name" value="PNT"/>
    <property type="match status" value="1"/>
</dbReference>
<comment type="function">
    <text evidence="2">Transcription factor. Directly controls the expression of cytokine and chemokine genes in a wide variety of different cellular contexts. May control the differentiation, survival and proliferation of lymphoid cells. May also regulate angiogenesis through regulation of expression of genes controlling endothelial cell migration and invasion.</text>
</comment>
<comment type="activity regulation">
    <text evidence="3">Autoinhibited by a module composed of four alpha helices (HI-1, HI-2, H4, and H5) that flank the DNA-binding ETS domain, reducing the affinity for DNA. Phosphorylation by CaMK2/CaMKII in response to calcium signaling decreases affinity for DNA.</text>
</comment>
<comment type="subunit">
    <text evidence="2 3">Binds DNA as a homodimer; homodimerization is required for transcription activation (By similarity). Interacts with MAF and MAFB. Interacts with PAX5; the interaction alters DNA-binding properties (By similarity). Interacts with DAXX. Interacts with UBE2I. Interacts with SP100; the interaction is direct and modulates ETS1 transcriptional activity (By similarity).</text>
</comment>
<comment type="subcellular location">
    <subcellularLocation>
        <location evidence="2">Nucleus</location>
    </subcellularLocation>
    <subcellularLocation>
        <location evidence="2">Cytoplasm</location>
    </subcellularLocation>
</comment>
<comment type="alternative products">
    <event type="alternative splicing"/>
    <isoform>
        <id>P41156-1</id>
        <name>1</name>
        <sequence type="displayed"/>
    </isoform>
    <text>At least 2 isoforms are produced.</text>
</comment>
<comment type="PTM">
    <text evidence="3">Sumoylated on Lys-15 and Lys-227, preferentially with SUMO2; which inhibits transcriptional activity.</text>
</comment>
<comment type="PTM">
    <text evidence="3">Ubiquitinated; which induces proteasomal degradation.</text>
</comment>
<comment type="PTM">
    <text evidence="3">Phosphorylation at Ser-251, Ser-282 and Ser-285 by CaMK2/CaMKII in response to calcium signaling decreases affinity for DNA: an increasing number of phosphoserines causes DNA-binding to become progressively weaker.</text>
</comment>
<comment type="similarity">
    <text evidence="6">Belongs to the ETS family.</text>
</comment>
<organism>
    <name type="scientific">Rattus norvegicus</name>
    <name type="common">Rat</name>
    <dbReference type="NCBI Taxonomy" id="10116"/>
    <lineage>
        <taxon>Eukaryota</taxon>
        <taxon>Metazoa</taxon>
        <taxon>Chordata</taxon>
        <taxon>Craniata</taxon>
        <taxon>Vertebrata</taxon>
        <taxon>Euteleostomi</taxon>
        <taxon>Mammalia</taxon>
        <taxon>Eutheria</taxon>
        <taxon>Euarchontoglires</taxon>
        <taxon>Glires</taxon>
        <taxon>Rodentia</taxon>
        <taxon>Myomorpha</taxon>
        <taxon>Muroidea</taxon>
        <taxon>Muridae</taxon>
        <taxon>Murinae</taxon>
        <taxon>Rattus</taxon>
    </lineage>
</organism>
<evidence type="ECO:0000250" key="1"/>
<evidence type="ECO:0000250" key="2">
    <source>
        <dbReference type="UniProtKB" id="P14921"/>
    </source>
</evidence>
<evidence type="ECO:0000250" key="3">
    <source>
        <dbReference type="UniProtKB" id="P27577"/>
    </source>
</evidence>
<evidence type="ECO:0000255" key="4">
    <source>
        <dbReference type="PROSITE-ProRule" id="PRU00237"/>
    </source>
</evidence>
<evidence type="ECO:0000255" key="5">
    <source>
        <dbReference type="PROSITE-ProRule" id="PRU00762"/>
    </source>
</evidence>
<evidence type="ECO:0000305" key="6"/>
<evidence type="ECO:0007744" key="7">
    <source>
    </source>
</evidence>